<name>TRHO_SHESM</name>
<protein>
    <recommendedName>
        <fullName evidence="1">tRNA uridine(34) hydroxylase</fullName>
        <ecNumber evidence="1">1.14.-.-</ecNumber>
    </recommendedName>
    <alternativeName>
        <fullName evidence="1">tRNA hydroxylation protein O</fullName>
    </alternativeName>
</protein>
<evidence type="ECO:0000255" key="1">
    <source>
        <dbReference type="HAMAP-Rule" id="MF_00469"/>
    </source>
</evidence>
<dbReference type="EC" id="1.14.-.-" evidence="1"/>
<dbReference type="EMBL" id="CP000446">
    <property type="protein sequence ID" value="ABI38834.1"/>
    <property type="molecule type" value="Genomic_DNA"/>
</dbReference>
<dbReference type="RefSeq" id="WP_011622531.1">
    <property type="nucleotide sequence ID" value="NC_008321.1"/>
</dbReference>
<dbReference type="SMR" id="Q0HJD3"/>
<dbReference type="KEGG" id="she:Shewmr4_1760"/>
<dbReference type="HOGENOM" id="CLU_038878_0_0_6"/>
<dbReference type="GO" id="GO:0016705">
    <property type="term" value="F:oxidoreductase activity, acting on paired donors, with incorporation or reduction of molecular oxygen"/>
    <property type="evidence" value="ECO:0007669"/>
    <property type="project" value="UniProtKB-UniRule"/>
</dbReference>
<dbReference type="GO" id="GO:0006400">
    <property type="term" value="P:tRNA modification"/>
    <property type="evidence" value="ECO:0007669"/>
    <property type="project" value="UniProtKB-UniRule"/>
</dbReference>
<dbReference type="CDD" id="cd01518">
    <property type="entry name" value="RHOD_YceA"/>
    <property type="match status" value="1"/>
</dbReference>
<dbReference type="Gene3D" id="3.30.70.100">
    <property type="match status" value="1"/>
</dbReference>
<dbReference type="Gene3D" id="3.40.250.10">
    <property type="entry name" value="Rhodanese-like domain"/>
    <property type="match status" value="1"/>
</dbReference>
<dbReference type="HAMAP" id="MF_00469">
    <property type="entry name" value="TrhO"/>
    <property type="match status" value="1"/>
</dbReference>
<dbReference type="InterPro" id="IPR001763">
    <property type="entry name" value="Rhodanese-like_dom"/>
</dbReference>
<dbReference type="InterPro" id="IPR036873">
    <property type="entry name" value="Rhodanese-like_dom_sf"/>
</dbReference>
<dbReference type="InterPro" id="IPR020936">
    <property type="entry name" value="TrhO"/>
</dbReference>
<dbReference type="InterPro" id="IPR040503">
    <property type="entry name" value="TRHO_N"/>
</dbReference>
<dbReference type="NCBIfam" id="NF001136">
    <property type="entry name" value="PRK00142.1-4"/>
    <property type="match status" value="1"/>
</dbReference>
<dbReference type="PANTHER" id="PTHR43268:SF3">
    <property type="entry name" value="RHODANESE-LIKE DOMAIN-CONTAINING PROTEIN 7-RELATED"/>
    <property type="match status" value="1"/>
</dbReference>
<dbReference type="PANTHER" id="PTHR43268">
    <property type="entry name" value="THIOSULFATE SULFURTRANSFERASE/RHODANESE-LIKE DOMAIN-CONTAINING PROTEIN 2"/>
    <property type="match status" value="1"/>
</dbReference>
<dbReference type="Pfam" id="PF00581">
    <property type="entry name" value="Rhodanese"/>
    <property type="match status" value="1"/>
</dbReference>
<dbReference type="Pfam" id="PF17773">
    <property type="entry name" value="UPF0176_N"/>
    <property type="match status" value="1"/>
</dbReference>
<dbReference type="SMART" id="SM00450">
    <property type="entry name" value="RHOD"/>
    <property type="match status" value="1"/>
</dbReference>
<dbReference type="SUPFAM" id="SSF52821">
    <property type="entry name" value="Rhodanese/Cell cycle control phosphatase"/>
    <property type="match status" value="1"/>
</dbReference>
<dbReference type="PROSITE" id="PS50206">
    <property type="entry name" value="RHODANESE_3"/>
    <property type="match status" value="1"/>
</dbReference>
<sequence length="330" mass="37529">MSNVVVCALYKFVSLPHFESLREPLLSMMEQAEIKGTLLLASEGINGTVAGTQAAIDALLAWLNNQNGLENIVYKLSFDDEMPFYRTKVKLKKEIVTMGVEGIDPLKVVGTYVKPQDWNALISDPEVILVDTRNDYEVQIGTFKNAINPVTETFREFPDYVKQNLDPAKHKKVAMFCTGGIRCEKSTAYLKEQGFEEVYHLEGGILKYLEEVKQEESLWEGECFVFDNRVAVDHDLKKGQYDQCNACRMPITEAEKLSPAYVQGVSCPHCIDKISDEQRKRFVERERQVNLAKSRNEAHIGSDVNQVIEARRQKKEALRQQSAEKNKAKQ</sequence>
<gene>
    <name evidence="1" type="primary">trhO</name>
    <name type="ordered locus">Shewmr4_1760</name>
</gene>
<comment type="function">
    <text evidence="1">Catalyzes oxygen-dependent 5-hydroxyuridine (ho5U) modification at position 34 in tRNAs.</text>
</comment>
<comment type="catalytic activity">
    <reaction evidence="1">
        <text>uridine(34) in tRNA + AH2 + O2 = 5-hydroxyuridine(34) in tRNA + A + H2O</text>
        <dbReference type="Rhea" id="RHEA:64224"/>
        <dbReference type="Rhea" id="RHEA-COMP:11727"/>
        <dbReference type="Rhea" id="RHEA-COMP:13381"/>
        <dbReference type="ChEBI" id="CHEBI:13193"/>
        <dbReference type="ChEBI" id="CHEBI:15377"/>
        <dbReference type="ChEBI" id="CHEBI:15379"/>
        <dbReference type="ChEBI" id="CHEBI:17499"/>
        <dbReference type="ChEBI" id="CHEBI:65315"/>
        <dbReference type="ChEBI" id="CHEBI:136877"/>
    </reaction>
</comment>
<comment type="similarity">
    <text evidence="1">Belongs to the TrhO family.</text>
</comment>
<organism>
    <name type="scientific">Shewanella sp. (strain MR-4)</name>
    <dbReference type="NCBI Taxonomy" id="60480"/>
    <lineage>
        <taxon>Bacteria</taxon>
        <taxon>Pseudomonadati</taxon>
        <taxon>Pseudomonadota</taxon>
        <taxon>Gammaproteobacteria</taxon>
        <taxon>Alteromonadales</taxon>
        <taxon>Shewanellaceae</taxon>
        <taxon>Shewanella</taxon>
    </lineage>
</organism>
<proteinExistence type="inferred from homology"/>
<keyword id="KW-0560">Oxidoreductase</keyword>
<keyword id="KW-0819">tRNA processing</keyword>
<feature type="chain" id="PRO_1000013775" description="tRNA uridine(34) hydroxylase">
    <location>
        <begin position="1"/>
        <end position="330"/>
    </location>
</feature>
<feature type="domain" description="Rhodanese" evidence="1">
    <location>
        <begin position="123"/>
        <end position="217"/>
    </location>
</feature>
<feature type="active site" description="Cysteine persulfide intermediate" evidence="1">
    <location>
        <position position="177"/>
    </location>
</feature>
<accession>Q0HJD3</accession>
<reference key="1">
    <citation type="submission" date="2006-08" db="EMBL/GenBank/DDBJ databases">
        <title>Complete sequence of Shewanella sp. MR-4.</title>
        <authorList>
            <consortium name="US DOE Joint Genome Institute"/>
            <person name="Copeland A."/>
            <person name="Lucas S."/>
            <person name="Lapidus A."/>
            <person name="Barry K."/>
            <person name="Detter J.C."/>
            <person name="Glavina del Rio T."/>
            <person name="Hammon N."/>
            <person name="Israni S."/>
            <person name="Dalin E."/>
            <person name="Tice H."/>
            <person name="Pitluck S."/>
            <person name="Kiss H."/>
            <person name="Brettin T."/>
            <person name="Bruce D."/>
            <person name="Han C."/>
            <person name="Tapia R."/>
            <person name="Gilna P."/>
            <person name="Schmutz J."/>
            <person name="Larimer F."/>
            <person name="Land M."/>
            <person name="Hauser L."/>
            <person name="Kyrpides N."/>
            <person name="Mikhailova N."/>
            <person name="Nealson K."/>
            <person name="Konstantinidis K."/>
            <person name="Klappenbach J."/>
            <person name="Tiedje J."/>
            <person name="Richardson P."/>
        </authorList>
    </citation>
    <scope>NUCLEOTIDE SEQUENCE [LARGE SCALE GENOMIC DNA]</scope>
    <source>
        <strain>MR-4</strain>
    </source>
</reference>